<gene>
    <name evidence="1" type="primary">gcvH</name>
    <name type="ordered locus">Deide_04950</name>
</gene>
<proteinExistence type="inferred from homology"/>
<evidence type="ECO:0000255" key="1">
    <source>
        <dbReference type="HAMAP-Rule" id="MF_00272"/>
    </source>
</evidence>
<evidence type="ECO:0000255" key="2">
    <source>
        <dbReference type="PROSITE-ProRule" id="PRU01066"/>
    </source>
</evidence>
<protein>
    <recommendedName>
        <fullName evidence="1">Glycine cleavage system H protein</fullName>
    </recommendedName>
</protein>
<feature type="chain" id="PRO_1000204743" description="Glycine cleavage system H protein">
    <location>
        <begin position="1"/>
        <end position="120"/>
    </location>
</feature>
<feature type="domain" description="Lipoyl-binding" evidence="2">
    <location>
        <begin position="19"/>
        <end position="101"/>
    </location>
</feature>
<feature type="modified residue" description="N6-lipoyllysine" evidence="1">
    <location>
        <position position="60"/>
    </location>
</feature>
<reference key="1">
    <citation type="journal article" date="2009" name="PLoS Genet.">
        <title>Alliance of proteomics and genomics to unravel the specificities of Sahara bacterium Deinococcus deserti.</title>
        <authorList>
            <person name="de Groot A."/>
            <person name="Dulermo R."/>
            <person name="Ortet P."/>
            <person name="Blanchard L."/>
            <person name="Guerin P."/>
            <person name="Fernandez B."/>
            <person name="Vacherie B."/>
            <person name="Dossat C."/>
            <person name="Jolivet E."/>
            <person name="Siguier P."/>
            <person name="Chandler M."/>
            <person name="Barakat M."/>
            <person name="Dedieu A."/>
            <person name="Barbe V."/>
            <person name="Heulin T."/>
            <person name="Sommer S."/>
            <person name="Achouak W."/>
            <person name="Armengaud J."/>
        </authorList>
    </citation>
    <scope>NUCLEOTIDE SEQUENCE [LARGE SCALE GENOMIC DNA]</scope>
    <source>
        <strain>DSM 17065 / CIP 109153 / LMG 22923 / VCD115</strain>
    </source>
</reference>
<dbReference type="EMBL" id="CP001114">
    <property type="protein sequence ID" value="ACO45330.1"/>
    <property type="molecule type" value="Genomic_DNA"/>
</dbReference>
<dbReference type="RefSeq" id="WP_012692453.1">
    <property type="nucleotide sequence ID" value="NC_012526.1"/>
</dbReference>
<dbReference type="SMR" id="C1D0F6"/>
<dbReference type="STRING" id="546414.Deide_04950"/>
<dbReference type="PaxDb" id="546414-Deide_04950"/>
<dbReference type="KEGG" id="ddr:Deide_04950"/>
<dbReference type="eggNOG" id="COG0509">
    <property type="taxonomic scope" value="Bacteria"/>
</dbReference>
<dbReference type="HOGENOM" id="CLU_097408_2_2_0"/>
<dbReference type="OrthoDB" id="9796712at2"/>
<dbReference type="Proteomes" id="UP000002208">
    <property type="component" value="Chromosome"/>
</dbReference>
<dbReference type="GO" id="GO:0005829">
    <property type="term" value="C:cytosol"/>
    <property type="evidence" value="ECO:0007669"/>
    <property type="project" value="TreeGrafter"/>
</dbReference>
<dbReference type="GO" id="GO:0005960">
    <property type="term" value="C:glycine cleavage complex"/>
    <property type="evidence" value="ECO:0007669"/>
    <property type="project" value="InterPro"/>
</dbReference>
<dbReference type="GO" id="GO:0019464">
    <property type="term" value="P:glycine decarboxylation via glycine cleavage system"/>
    <property type="evidence" value="ECO:0007669"/>
    <property type="project" value="UniProtKB-UniRule"/>
</dbReference>
<dbReference type="CDD" id="cd06848">
    <property type="entry name" value="GCS_H"/>
    <property type="match status" value="1"/>
</dbReference>
<dbReference type="Gene3D" id="2.40.50.100">
    <property type="match status" value="1"/>
</dbReference>
<dbReference type="HAMAP" id="MF_00272">
    <property type="entry name" value="GcvH"/>
    <property type="match status" value="1"/>
</dbReference>
<dbReference type="InterPro" id="IPR003016">
    <property type="entry name" value="2-oxoA_DH_lipoyl-BS"/>
</dbReference>
<dbReference type="InterPro" id="IPR000089">
    <property type="entry name" value="Biotin_lipoyl"/>
</dbReference>
<dbReference type="InterPro" id="IPR002930">
    <property type="entry name" value="GCV_H"/>
</dbReference>
<dbReference type="InterPro" id="IPR033753">
    <property type="entry name" value="GCV_H/Fam206"/>
</dbReference>
<dbReference type="InterPro" id="IPR017453">
    <property type="entry name" value="GCV_H_sub"/>
</dbReference>
<dbReference type="InterPro" id="IPR011053">
    <property type="entry name" value="Single_hybrid_motif"/>
</dbReference>
<dbReference type="NCBIfam" id="TIGR00527">
    <property type="entry name" value="gcvH"/>
    <property type="match status" value="1"/>
</dbReference>
<dbReference type="NCBIfam" id="NF002270">
    <property type="entry name" value="PRK01202.1"/>
    <property type="match status" value="1"/>
</dbReference>
<dbReference type="PANTHER" id="PTHR11715">
    <property type="entry name" value="GLYCINE CLEAVAGE SYSTEM H PROTEIN"/>
    <property type="match status" value="1"/>
</dbReference>
<dbReference type="PANTHER" id="PTHR11715:SF3">
    <property type="entry name" value="GLYCINE CLEAVAGE SYSTEM H PROTEIN-RELATED"/>
    <property type="match status" value="1"/>
</dbReference>
<dbReference type="Pfam" id="PF01597">
    <property type="entry name" value="GCV_H"/>
    <property type="match status" value="1"/>
</dbReference>
<dbReference type="SUPFAM" id="SSF51230">
    <property type="entry name" value="Single hybrid motif"/>
    <property type="match status" value="1"/>
</dbReference>
<dbReference type="PROSITE" id="PS50968">
    <property type="entry name" value="BIOTINYL_LIPOYL"/>
    <property type="match status" value="1"/>
</dbReference>
<dbReference type="PROSITE" id="PS00189">
    <property type="entry name" value="LIPOYL"/>
    <property type="match status" value="1"/>
</dbReference>
<comment type="function">
    <text evidence="1">The glycine cleavage system catalyzes the degradation of glycine. The H protein shuttles the methylamine group of glycine from the P protein to the T protein.</text>
</comment>
<comment type="cofactor">
    <cofactor evidence="1">
        <name>(R)-lipoate</name>
        <dbReference type="ChEBI" id="CHEBI:83088"/>
    </cofactor>
    <text evidence="1">Binds 1 lipoyl cofactor covalently.</text>
</comment>
<comment type="subunit">
    <text evidence="1">The glycine cleavage system is composed of four proteins: P, T, L and H.</text>
</comment>
<comment type="similarity">
    <text evidence="1">Belongs to the GcvH family.</text>
</comment>
<name>GCSH_DEIDV</name>
<keyword id="KW-0450">Lipoyl</keyword>
<keyword id="KW-1185">Reference proteome</keyword>
<sequence>MTTPTTLKYAASHEWLSEDGTVGITDHAQEQLGDVVYVELPEVGREVTAGEAVAVVESVKTASDIYAPASGRIVAVNEELSGNPELVNSAPYEGGWLFKLEVTEEGSDLLDAAAYDAQAH</sequence>
<organism>
    <name type="scientific">Deinococcus deserti (strain DSM 17065 / CIP 109153 / LMG 22923 / VCD115)</name>
    <dbReference type="NCBI Taxonomy" id="546414"/>
    <lineage>
        <taxon>Bacteria</taxon>
        <taxon>Thermotogati</taxon>
        <taxon>Deinococcota</taxon>
        <taxon>Deinococci</taxon>
        <taxon>Deinococcales</taxon>
        <taxon>Deinococcaceae</taxon>
        <taxon>Deinococcus</taxon>
    </lineage>
</organism>
<accession>C1D0F6</accession>